<name>RS18_CALS4</name>
<gene>
    <name evidence="1" type="primary">rpsR</name>
    <name type="ordered locus">TTE2779</name>
</gene>
<accession>Q8R6M3</accession>
<dbReference type="EMBL" id="AE008691">
    <property type="protein sequence ID" value="AAM25883.1"/>
    <property type="molecule type" value="Genomic_DNA"/>
</dbReference>
<dbReference type="RefSeq" id="WP_011026748.1">
    <property type="nucleotide sequence ID" value="NC_003869.1"/>
</dbReference>
<dbReference type="SMR" id="Q8R6M3"/>
<dbReference type="STRING" id="273068.TTE2779"/>
<dbReference type="KEGG" id="tte:TTE2779"/>
<dbReference type="eggNOG" id="COG0238">
    <property type="taxonomic scope" value="Bacteria"/>
</dbReference>
<dbReference type="HOGENOM" id="CLU_148710_2_2_9"/>
<dbReference type="OrthoDB" id="9812008at2"/>
<dbReference type="Proteomes" id="UP000000555">
    <property type="component" value="Chromosome"/>
</dbReference>
<dbReference type="GO" id="GO:0022627">
    <property type="term" value="C:cytosolic small ribosomal subunit"/>
    <property type="evidence" value="ECO:0007669"/>
    <property type="project" value="TreeGrafter"/>
</dbReference>
<dbReference type="GO" id="GO:0070181">
    <property type="term" value="F:small ribosomal subunit rRNA binding"/>
    <property type="evidence" value="ECO:0007669"/>
    <property type="project" value="TreeGrafter"/>
</dbReference>
<dbReference type="GO" id="GO:0003735">
    <property type="term" value="F:structural constituent of ribosome"/>
    <property type="evidence" value="ECO:0007669"/>
    <property type="project" value="InterPro"/>
</dbReference>
<dbReference type="GO" id="GO:0006412">
    <property type="term" value="P:translation"/>
    <property type="evidence" value="ECO:0007669"/>
    <property type="project" value="UniProtKB-UniRule"/>
</dbReference>
<dbReference type="FunFam" id="4.10.640.10:FF:000004">
    <property type="entry name" value="30S ribosomal protein S18"/>
    <property type="match status" value="1"/>
</dbReference>
<dbReference type="Gene3D" id="4.10.640.10">
    <property type="entry name" value="Ribosomal protein S18"/>
    <property type="match status" value="1"/>
</dbReference>
<dbReference type="HAMAP" id="MF_00270">
    <property type="entry name" value="Ribosomal_bS18"/>
    <property type="match status" value="1"/>
</dbReference>
<dbReference type="InterPro" id="IPR001648">
    <property type="entry name" value="Ribosomal_bS18"/>
</dbReference>
<dbReference type="InterPro" id="IPR018275">
    <property type="entry name" value="Ribosomal_bS18_CS"/>
</dbReference>
<dbReference type="InterPro" id="IPR036870">
    <property type="entry name" value="Ribosomal_bS18_sf"/>
</dbReference>
<dbReference type="NCBIfam" id="TIGR00165">
    <property type="entry name" value="S18"/>
    <property type="match status" value="1"/>
</dbReference>
<dbReference type="PANTHER" id="PTHR13479">
    <property type="entry name" value="30S RIBOSOMAL PROTEIN S18"/>
    <property type="match status" value="1"/>
</dbReference>
<dbReference type="PANTHER" id="PTHR13479:SF40">
    <property type="entry name" value="SMALL RIBOSOMAL SUBUNIT PROTEIN BS18M"/>
    <property type="match status" value="1"/>
</dbReference>
<dbReference type="Pfam" id="PF01084">
    <property type="entry name" value="Ribosomal_S18"/>
    <property type="match status" value="1"/>
</dbReference>
<dbReference type="PRINTS" id="PR00974">
    <property type="entry name" value="RIBOSOMALS18"/>
</dbReference>
<dbReference type="SUPFAM" id="SSF46911">
    <property type="entry name" value="Ribosomal protein S18"/>
    <property type="match status" value="1"/>
</dbReference>
<dbReference type="PROSITE" id="PS00057">
    <property type="entry name" value="RIBOSOMAL_S18"/>
    <property type="match status" value="1"/>
</dbReference>
<feature type="chain" id="PRO_0000111252" description="Small ribosomal subunit protein bS18">
    <location>
        <begin position="1"/>
        <end position="89"/>
    </location>
</feature>
<feature type="region of interest" description="Disordered" evidence="2">
    <location>
        <begin position="1"/>
        <end position="22"/>
    </location>
</feature>
<feature type="compositionally biased region" description="Low complexity" evidence="2">
    <location>
        <begin position="1"/>
        <end position="15"/>
    </location>
</feature>
<protein>
    <recommendedName>
        <fullName evidence="1">Small ribosomal subunit protein bS18</fullName>
    </recommendedName>
    <alternativeName>
        <fullName evidence="3">30S ribosomal protein S18</fullName>
    </alternativeName>
</protein>
<sequence length="89" mass="10229">MTTANTNETAAAAAAKNRRNKKKKRVCAFCADNIDRIDYKDVARLRKYITERGKILPRRITGNCARHQRQLTKAIKRARQIALLPYTVE</sequence>
<evidence type="ECO:0000255" key="1">
    <source>
        <dbReference type="HAMAP-Rule" id="MF_00270"/>
    </source>
</evidence>
<evidence type="ECO:0000256" key="2">
    <source>
        <dbReference type="SAM" id="MobiDB-lite"/>
    </source>
</evidence>
<evidence type="ECO:0000305" key="3"/>
<comment type="function">
    <text evidence="1">Binds as a heterodimer with protein bS6 to the central domain of the 16S rRNA, where it helps stabilize the platform of the 30S subunit.</text>
</comment>
<comment type="subunit">
    <text evidence="1">Part of the 30S ribosomal subunit. Forms a tight heterodimer with protein bS6.</text>
</comment>
<comment type="similarity">
    <text evidence="1">Belongs to the bacterial ribosomal protein bS18 family.</text>
</comment>
<reference key="1">
    <citation type="journal article" date="2002" name="Genome Res.">
        <title>A complete sequence of the T. tengcongensis genome.</title>
        <authorList>
            <person name="Bao Q."/>
            <person name="Tian Y."/>
            <person name="Li W."/>
            <person name="Xu Z."/>
            <person name="Xuan Z."/>
            <person name="Hu S."/>
            <person name="Dong W."/>
            <person name="Yang J."/>
            <person name="Chen Y."/>
            <person name="Xue Y."/>
            <person name="Xu Y."/>
            <person name="Lai X."/>
            <person name="Huang L."/>
            <person name="Dong X."/>
            <person name="Ma Y."/>
            <person name="Ling L."/>
            <person name="Tan H."/>
            <person name="Chen R."/>
            <person name="Wang J."/>
            <person name="Yu J."/>
            <person name="Yang H."/>
        </authorList>
    </citation>
    <scope>NUCLEOTIDE SEQUENCE [LARGE SCALE GENOMIC DNA]</scope>
    <source>
        <strain>DSM 15242 / JCM 11007 / NBRC 100824 / MB4</strain>
    </source>
</reference>
<organism>
    <name type="scientific">Caldanaerobacter subterraneus subsp. tengcongensis (strain DSM 15242 / JCM 11007 / NBRC 100824 / MB4)</name>
    <name type="common">Thermoanaerobacter tengcongensis</name>
    <dbReference type="NCBI Taxonomy" id="273068"/>
    <lineage>
        <taxon>Bacteria</taxon>
        <taxon>Bacillati</taxon>
        <taxon>Bacillota</taxon>
        <taxon>Clostridia</taxon>
        <taxon>Thermoanaerobacterales</taxon>
        <taxon>Thermoanaerobacteraceae</taxon>
        <taxon>Caldanaerobacter</taxon>
    </lineage>
</organism>
<keyword id="KW-1185">Reference proteome</keyword>
<keyword id="KW-0687">Ribonucleoprotein</keyword>
<keyword id="KW-0689">Ribosomal protein</keyword>
<keyword id="KW-0694">RNA-binding</keyword>
<keyword id="KW-0699">rRNA-binding</keyword>
<proteinExistence type="inferred from homology"/>